<protein>
    <recommendedName>
        <fullName>Unknown protein 1 from 2D-PAGE</fullName>
    </recommendedName>
</protein>
<feature type="chain" id="PRO_0000285972" description="Unknown protein 1 from 2D-PAGE">
    <location>
        <begin position="1" status="less than"/>
        <end position="9" status="greater than"/>
    </location>
</feature>
<feature type="non-terminal residue" evidence="2">
    <location>
        <position position="1"/>
    </location>
</feature>
<feature type="non-terminal residue" evidence="2">
    <location>
        <position position="9"/>
    </location>
</feature>
<proteinExistence type="evidence at protein level"/>
<accession>P83529</accession>
<organism>
    <name type="scientific">Fructilactobacillus sanfranciscensis</name>
    <name type="common">Lactobacillus sanfranciscensis</name>
    <dbReference type="NCBI Taxonomy" id="1625"/>
    <lineage>
        <taxon>Bacteria</taxon>
        <taxon>Bacillati</taxon>
        <taxon>Bacillota</taxon>
        <taxon>Bacilli</taxon>
        <taxon>Lactobacillales</taxon>
        <taxon>Lactobacillaceae</taxon>
        <taxon>Fructilactobacillus</taxon>
    </lineage>
</organism>
<comment type="miscellaneous">
    <text evidence="1">On the 2D-gel the determined MW of this unknown protein is: 15 kDa.</text>
</comment>
<name>UP01_FRUSA</name>
<reference evidence="3" key="1">
    <citation type="journal article" date="2002" name="Proteomics">
        <title>High pressure effects step-wise altered protein expression in Lactobacillus sanfranciscensis.</title>
        <authorList>
            <person name="Drews O."/>
            <person name="Weiss W."/>
            <person name="Reil G."/>
            <person name="Parlar H."/>
            <person name="Wait R."/>
            <person name="Goerg A."/>
        </authorList>
    </citation>
    <scope>PROTEIN SEQUENCE</scope>
    <source>
        <strain evidence="1">ATCC 27651 / DSM 20451 / JCM 5668 / KCTC 3205 / NCIMB 702811 / NRRL B-3934 / L-12</strain>
    </source>
</reference>
<evidence type="ECO:0000269" key="1">
    <source>
    </source>
</evidence>
<evidence type="ECO:0000303" key="2">
    <source>
    </source>
</evidence>
<evidence type="ECO:0000305" key="3"/>
<sequence>GYGFLTTDD</sequence>
<keyword id="KW-0903">Direct protein sequencing</keyword>